<sequence>MNLKDIAKIINSDFSGEYFEITKMNTLRDATKSEISFVANAKYIKEIQNSNAGAIIVSKDTKEFVPSGCVALVVENPYWEMATLSKYFAPSIEDETLPEPKIGEGTTISPRAEIARGAIIGKGCTIMAHVYIGTNAVIGDNTIIYPSVTVYRDCRVGSECIIHANTTIGSDGFGFATNKQGEHRKIYQNGNVEIEDNVEIGSSTTIDRAVFGTTLIKYGVRIDNLVQVGHNCVIGEHSVLVAQAGISGSTTMGRNVVMGGQSATAGHLSIAPFTTMAARSGVTKSIDKSGLTFAGFPLLEHRLWLKLQAKIARLIKQN</sequence>
<evidence type="ECO:0000255" key="1">
    <source>
        <dbReference type="HAMAP-Rule" id="MF_00523"/>
    </source>
</evidence>
<comment type="function">
    <text evidence="1">Catalyzes the N-acylation of UDP-3-O-acylglucosamine using 3-hydroxyacyl-ACP as the acyl donor. Is involved in the biosynthesis of lipid A, a phosphorylated glycolipid that anchors the lipopolysaccharide to the outer membrane of the cell.</text>
</comment>
<comment type="catalytic activity">
    <reaction evidence="1">
        <text>a UDP-3-O-[(3R)-3-hydroxyacyl]-alpha-D-glucosamine + a (3R)-hydroxyacyl-[ACP] = a UDP-2-N,3-O-bis[(3R)-3-hydroxyacyl]-alpha-D-glucosamine + holo-[ACP] + H(+)</text>
        <dbReference type="Rhea" id="RHEA:53836"/>
        <dbReference type="Rhea" id="RHEA-COMP:9685"/>
        <dbReference type="Rhea" id="RHEA-COMP:9945"/>
        <dbReference type="ChEBI" id="CHEBI:15378"/>
        <dbReference type="ChEBI" id="CHEBI:64479"/>
        <dbReference type="ChEBI" id="CHEBI:78827"/>
        <dbReference type="ChEBI" id="CHEBI:137740"/>
        <dbReference type="ChEBI" id="CHEBI:137748"/>
        <dbReference type="EC" id="2.3.1.191"/>
    </reaction>
</comment>
<comment type="pathway">
    <text evidence="1">Bacterial outer membrane biogenesis; LPS lipid A biosynthesis.</text>
</comment>
<comment type="subunit">
    <text evidence="1">Homotrimer.</text>
</comment>
<comment type="similarity">
    <text evidence="1">Belongs to the transferase hexapeptide repeat family. LpxD subfamily.</text>
</comment>
<reference key="1">
    <citation type="journal article" date="2008" name="Appl. Environ. Microbiol.">
        <title>Genome of the epsilonproteobacterial chemolithoautotroph Sulfurimonas denitrificans.</title>
        <authorList>
            <person name="Sievert S.M."/>
            <person name="Scott K.M."/>
            <person name="Klotz M.G."/>
            <person name="Chain P.S.G."/>
            <person name="Hauser L.J."/>
            <person name="Hemp J."/>
            <person name="Huegler M."/>
            <person name="Land M."/>
            <person name="Lapidus A."/>
            <person name="Larimer F.W."/>
            <person name="Lucas S."/>
            <person name="Malfatti S.A."/>
            <person name="Meyer F."/>
            <person name="Paulsen I.T."/>
            <person name="Ren Q."/>
            <person name="Simon J."/>
            <person name="Bailey K."/>
            <person name="Diaz E."/>
            <person name="Fitzpatrick K.A."/>
            <person name="Glover B."/>
            <person name="Gwatney N."/>
            <person name="Korajkic A."/>
            <person name="Long A."/>
            <person name="Mobberley J.M."/>
            <person name="Pantry S.N."/>
            <person name="Pazder G."/>
            <person name="Peterson S."/>
            <person name="Quintanilla J.D."/>
            <person name="Sprinkle R."/>
            <person name="Stephens J."/>
            <person name="Thomas P."/>
            <person name="Vaughn R."/>
            <person name="Weber M.J."/>
            <person name="Wooten L.L."/>
        </authorList>
    </citation>
    <scope>NUCLEOTIDE SEQUENCE [LARGE SCALE GENOMIC DNA]</scope>
    <source>
        <strain>ATCC 33889 / DSM 1251</strain>
    </source>
</reference>
<gene>
    <name evidence="1" type="primary">lpxD1</name>
    <name type="ordered locus">Suden_1138</name>
</gene>
<accession>Q30RG5</accession>
<name>LPXD1_SULDN</name>
<keyword id="KW-0012">Acyltransferase</keyword>
<keyword id="KW-0441">Lipid A biosynthesis</keyword>
<keyword id="KW-0444">Lipid biosynthesis</keyword>
<keyword id="KW-0443">Lipid metabolism</keyword>
<keyword id="KW-1185">Reference proteome</keyword>
<keyword id="KW-0677">Repeat</keyword>
<keyword id="KW-0808">Transferase</keyword>
<protein>
    <recommendedName>
        <fullName evidence="1">UDP-3-O-acylglucosamine N-acyltransferase 1</fullName>
        <ecNumber evidence="1">2.3.1.191</ecNumber>
    </recommendedName>
</protein>
<proteinExistence type="inferred from homology"/>
<dbReference type="EC" id="2.3.1.191" evidence="1"/>
<dbReference type="EMBL" id="CP000153">
    <property type="protein sequence ID" value="ABB44416.1"/>
    <property type="molecule type" value="Genomic_DNA"/>
</dbReference>
<dbReference type="RefSeq" id="WP_011372768.1">
    <property type="nucleotide sequence ID" value="NC_007575.1"/>
</dbReference>
<dbReference type="SMR" id="Q30RG5"/>
<dbReference type="STRING" id="326298.Suden_1138"/>
<dbReference type="KEGG" id="tdn:Suden_1138"/>
<dbReference type="eggNOG" id="COG1044">
    <property type="taxonomic scope" value="Bacteria"/>
</dbReference>
<dbReference type="HOGENOM" id="CLU_049865_0_0_7"/>
<dbReference type="OrthoDB" id="9784739at2"/>
<dbReference type="UniPathway" id="UPA00973"/>
<dbReference type="Proteomes" id="UP000002714">
    <property type="component" value="Chromosome"/>
</dbReference>
<dbReference type="GO" id="GO:0016020">
    <property type="term" value="C:membrane"/>
    <property type="evidence" value="ECO:0007669"/>
    <property type="project" value="GOC"/>
</dbReference>
<dbReference type="GO" id="GO:0016410">
    <property type="term" value="F:N-acyltransferase activity"/>
    <property type="evidence" value="ECO:0007669"/>
    <property type="project" value="InterPro"/>
</dbReference>
<dbReference type="GO" id="GO:0009245">
    <property type="term" value="P:lipid A biosynthetic process"/>
    <property type="evidence" value="ECO:0007669"/>
    <property type="project" value="UniProtKB-UniRule"/>
</dbReference>
<dbReference type="CDD" id="cd03352">
    <property type="entry name" value="LbH_LpxD"/>
    <property type="match status" value="1"/>
</dbReference>
<dbReference type="Gene3D" id="2.160.10.10">
    <property type="entry name" value="Hexapeptide repeat proteins"/>
    <property type="match status" value="1"/>
</dbReference>
<dbReference type="Gene3D" id="3.40.1390.10">
    <property type="entry name" value="MurE/MurF, N-terminal domain"/>
    <property type="match status" value="1"/>
</dbReference>
<dbReference type="HAMAP" id="MF_00523">
    <property type="entry name" value="LpxD"/>
    <property type="match status" value="1"/>
</dbReference>
<dbReference type="InterPro" id="IPR001451">
    <property type="entry name" value="Hexapep"/>
</dbReference>
<dbReference type="InterPro" id="IPR007691">
    <property type="entry name" value="LpxD"/>
</dbReference>
<dbReference type="InterPro" id="IPR011004">
    <property type="entry name" value="Trimer_LpxA-like_sf"/>
</dbReference>
<dbReference type="InterPro" id="IPR020573">
    <property type="entry name" value="UDP_GlcNAc_AcTrfase_non-rep"/>
</dbReference>
<dbReference type="NCBIfam" id="TIGR01853">
    <property type="entry name" value="lipid_A_lpxD"/>
    <property type="match status" value="1"/>
</dbReference>
<dbReference type="NCBIfam" id="NF002060">
    <property type="entry name" value="PRK00892.1"/>
    <property type="match status" value="1"/>
</dbReference>
<dbReference type="PANTHER" id="PTHR43378">
    <property type="entry name" value="UDP-3-O-ACYLGLUCOSAMINE N-ACYLTRANSFERASE"/>
    <property type="match status" value="1"/>
</dbReference>
<dbReference type="PANTHER" id="PTHR43378:SF2">
    <property type="entry name" value="UDP-3-O-ACYLGLUCOSAMINE N-ACYLTRANSFERASE 1, MITOCHONDRIAL-RELATED"/>
    <property type="match status" value="1"/>
</dbReference>
<dbReference type="Pfam" id="PF00132">
    <property type="entry name" value="Hexapep"/>
    <property type="match status" value="2"/>
</dbReference>
<dbReference type="Pfam" id="PF04613">
    <property type="entry name" value="LpxD"/>
    <property type="match status" value="1"/>
</dbReference>
<dbReference type="SUPFAM" id="SSF51161">
    <property type="entry name" value="Trimeric LpxA-like enzymes"/>
    <property type="match status" value="1"/>
</dbReference>
<feature type="chain" id="PRO_0000264452" description="UDP-3-O-acylglucosamine N-acyltransferase 1">
    <location>
        <begin position="1"/>
        <end position="318"/>
    </location>
</feature>
<feature type="active site" description="Proton acceptor" evidence="1">
    <location>
        <position position="230"/>
    </location>
</feature>
<organism>
    <name type="scientific">Sulfurimonas denitrificans (strain ATCC 33889 / DSM 1251)</name>
    <name type="common">Thiomicrospira denitrificans (strain ATCC 33889 / DSM 1251)</name>
    <dbReference type="NCBI Taxonomy" id="326298"/>
    <lineage>
        <taxon>Bacteria</taxon>
        <taxon>Pseudomonadati</taxon>
        <taxon>Campylobacterota</taxon>
        <taxon>Epsilonproteobacteria</taxon>
        <taxon>Campylobacterales</taxon>
        <taxon>Sulfurimonadaceae</taxon>
        <taxon>Sulfurimonas</taxon>
    </lineage>
</organism>